<evidence type="ECO:0000255" key="1">
    <source>
        <dbReference type="HAMAP-Rule" id="MF_00101"/>
    </source>
</evidence>
<sequence length="122" mass="13640">MIVGIGVDIVELDRMARSMKQPRFLKRLLTDAEYELSQQYPLPRQIEFVSGRFAAKEAYAKAIGTGIAHGLSWRHIEILPDETGRPVMTAPFVGKIHVSISHSQTYAIAQVILEEEGHHVSS</sequence>
<protein>
    <recommendedName>
        <fullName evidence="1">Holo-[acyl-carrier-protein] synthase</fullName>
        <shortName evidence="1">Holo-ACP synthase</shortName>
        <ecNumber evidence="1">2.7.8.7</ecNumber>
    </recommendedName>
    <alternativeName>
        <fullName evidence="1">4'-phosphopantetheinyl transferase AcpS</fullName>
    </alternativeName>
</protein>
<name>ACPS_EXISA</name>
<feature type="chain" id="PRO_1000202795" description="Holo-[acyl-carrier-protein] synthase">
    <location>
        <begin position="1"/>
        <end position="122"/>
    </location>
</feature>
<feature type="binding site" evidence="1">
    <location>
        <position position="8"/>
    </location>
    <ligand>
        <name>Mg(2+)</name>
        <dbReference type="ChEBI" id="CHEBI:18420"/>
    </ligand>
</feature>
<feature type="binding site" evidence="1">
    <location>
        <position position="57"/>
    </location>
    <ligand>
        <name>Mg(2+)</name>
        <dbReference type="ChEBI" id="CHEBI:18420"/>
    </ligand>
</feature>
<keyword id="KW-0963">Cytoplasm</keyword>
<keyword id="KW-0275">Fatty acid biosynthesis</keyword>
<keyword id="KW-0276">Fatty acid metabolism</keyword>
<keyword id="KW-0444">Lipid biosynthesis</keyword>
<keyword id="KW-0443">Lipid metabolism</keyword>
<keyword id="KW-0460">Magnesium</keyword>
<keyword id="KW-0479">Metal-binding</keyword>
<keyword id="KW-0808">Transferase</keyword>
<proteinExistence type="inferred from homology"/>
<gene>
    <name evidence="1" type="primary">acpS</name>
    <name type="ordered locus">EAT1b_2072</name>
</gene>
<reference key="1">
    <citation type="journal article" date="2011" name="J. Bacteriol.">
        <title>Complete genome sequence of the Thermophilic Bacterium Exiguobacterium sp. AT1b.</title>
        <authorList>
            <person name="Vishnivetskaya T.A."/>
            <person name="Lucas S."/>
            <person name="Copeland A."/>
            <person name="Lapidus A."/>
            <person name="Glavina del Rio T."/>
            <person name="Dalin E."/>
            <person name="Tice H."/>
            <person name="Bruce D.C."/>
            <person name="Goodwin L.A."/>
            <person name="Pitluck S."/>
            <person name="Saunders E."/>
            <person name="Brettin T."/>
            <person name="Detter C."/>
            <person name="Han C."/>
            <person name="Larimer F."/>
            <person name="Land M.L."/>
            <person name="Hauser L.J."/>
            <person name="Kyrpides N.C."/>
            <person name="Ovchinnikova G."/>
            <person name="Kathariou S."/>
            <person name="Ramaley R.F."/>
            <person name="Rodrigues D.F."/>
            <person name="Hendrix C."/>
            <person name="Richardson P."/>
            <person name="Tiedje J.M."/>
        </authorList>
    </citation>
    <scope>NUCLEOTIDE SEQUENCE [LARGE SCALE GENOMIC DNA]</scope>
    <source>
        <strain>ATCC BAA-1283 / AT1b</strain>
    </source>
</reference>
<dbReference type="EC" id="2.7.8.7" evidence="1"/>
<dbReference type="EMBL" id="CP001615">
    <property type="protein sequence ID" value="ACQ70995.1"/>
    <property type="molecule type" value="Genomic_DNA"/>
</dbReference>
<dbReference type="RefSeq" id="WP_015880554.1">
    <property type="nucleotide sequence ID" value="NC_012673.1"/>
</dbReference>
<dbReference type="SMR" id="C4L132"/>
<dbReference type="STRING" id="360911.EAT1b_2072"/>
<dbReference type="KEGG" id="eat:EAT1b_2072"/>
<dbReference type="eggNOG" id="COG0736">
    <property type="taxonomic scope" value="Bacteria"/>
</dbReference>
<dbReference type="HOGENOM" id="CLU_089696_1_2_9"/>
<dbReference type="OrthoDB" id="517356at2"/>
<dbReference type="Proteomes" id="UP000000716">
    <property type="component" value="Chromosome"/>
</dbReference>
<dbReference type="GO" id="GO:0005737">
    <property type="term" value="C:cytoplasm"/>
    <property type="evidence" value="ECO:0007669"/>
    <property type="project" value="UniProtKB-SubCell"/>
</dbReference>
<dbReference type="GO" id="GO:0008897">
    <property type="term" value="F:holo-[acyl-carrier-protein] synthase activity"/>
    <property type="evidence" value="ECO:0007669"/>
    <property type="project" value="UniProtKB-UniRule"/>
</dbReference>
<dbReference type="GO" id="GO:0000287">
    <property type="term" value="F:magnesium ion binding"/>
    <property type="evidence" value="ECO:0007669"/>
    <property type="project" value="UniProtKB-UniRule"/>
</dbReference>
<dbReference type="GO" id="GO:0006633">
    <property type="term" value="P:fatty acid biosynthetic process"/>
    <property type="evidence" value="ECO:0007669"/>
    <property type="project" value="UniProtKB-UniRule"/>
</dbReference>
<dbReference type="Gene3D" id="3.90.470.20">
    <property type="entry name" value="4'-phosphopantetheinyl transferase domain"/>
    <property type="match status" value="1"/>
</dbReference>
<dbReference type="HAMAP" id="MF_00101">
    <property type="entry name" value="AcpS"/>
    <property type="match status" value="1"/>
</dbReference>
<dbReference type="InterPro" id="IPR008278">
    <property type="entry name" value="4-PPantetheinyl_Trfase_dom"/>
</dbReference>
<dbReference type="InterPro" id="IPR037143">
    <property type="entry name" value="4-PPantetheinyl_Trfase_dom_sf"/>
</dbReference>
<dbReference type="InterPro" id="IPR002582">
    <property type="entry name" value="ACPS"/>
</dbReference>
<dbReference type="InterPro" id="IPR004568">
    <property type="entry name" value="Ppantetheine-prot_Trfase_dom"/>
</dbReference>
<dbReference type="NCBIfam" id="TIGR00516">
    <property type="entry name" value="acpS"/>
    <property type="match status" value="1"/>
</dbReference>
<dbReference type="NCBIfam" id="TIGR00556">
    <property type="entry name" value="pantethn_trn"/>
    <property type="match status" value="1"/>
</dbReference>
<dbReference type="Pfam" id="PF01648">
    <property type="entry name" value="ACPS"/>
    <property type="match status" value="1"/>
</dbReference>
<dbReference type="SUPFAM" id="SSF56214">
    <property type="entry name" value="4'-phosphopantetheinyl transferase"/>
    <property type="match status" value="1"/>
</dbReference>
<accession>C4L132</accession>
<comment type="function">
    <text evidence="1">Transfers the 4'-phosphopantetheine moiety from coenzyme A to a Ser of acyl-carrier-protein.</text>
</comment>
<comment type="catalytic activity">
    <reaction evidence="1">
        <text>apo-[ACP] + CoA = holo-[ACP] + adenosine 3',5'-bisphosphate + H(+)</text>
        <dbReference type="Rhea" id="RHEA:12068"/>
        <dbReference type="Rhea" id="RHEA-COMP:9685"/>
        <dbReference type="Rhea" id="RHEA-COMP:9690"/>
        <dbReference type="ChEBI" id="CHEBI:15378"/>
        <dbReference type="ChEBI" id="CHEBI:29999"/>
        <dbReference type="ChEBI" id="CHEBI:57287"/>
        <dbReference type="ChEBI" id="CHEBI:58343"/>
        <dbReference type="ChEBI" id="CHEBI:64479"/>
        <dbReference type="EC" id="2.7.8.7"/>
    </reaction>
</comment>
<comment type="cofactor">
    <cofactor evidence="1">
        <name>Mg(2+)</name>
        <dbReference type="ChEBI" id="CHEBI:18420"/>
    </cofactor>
</comment>
<comment type="subcellular location">
    <subcellularLocation>
        <location evidence="1">Cytoplasm</location>
    </subcellularLocation>
</comment>
<comment type="similarity">
    <text evidence="1">Belongs to the P-Pant transferase superfamily. AcpS family.</text>
</comment>
<organism>
    <name type="scientific">Exiguobacterium sp. (strain ATCC BAA-1283 / AT1b)</name>
    <dbReference type="NCBI Taxonomy" id="360911"/>
    <lineage>
        <taxon>Bacteria</taxon>
        <taxon>Bacillati</taxon>
        <taxon>Bacillota</taxon>
        <taxon>Bacilli</taxon>
        <taxon>Bacillales</taxon>
        <taxon>Bacillales Family XII. Incertae Sedis</taxon>
        <taxon>Exiguobacterium</taxon>
    </lineage>
</organism>